<keyword id="KW-0130">Cell adhesion</keyword>
<keyword id="KW-1015">Disulfide bond</keyword>
<keyword id="KW-0245">EGF-like domain</keyword>
<keyword id="KW-0325">Glycoprotein</keyword>
<keyword id="KW-0472">Membrane</keyword>
<keyword id="KW-0597">Phosphoprotein</keyword>
<keyword id="KW-1185">Reference proteome</keyword>
<keyword id="KW-0732">Signal</keyword>
<keyword id="KW-0812">Transmembrane</keyword>
<keyword id="KW-1133">Transmembrane helix</keyword>
<name>ADAM2_RABIT</name>
<evidence type="ECO:0000250" key="1"/>
<evidence type="ECO:0000250" key="2">
    <source>
        <dbReference type="UniProtKB" id="Q60718"/>
    </source>
</evidence>
<evidence type="ECO:0000255" key="3"/>
<evidence type="ECO:0000255" key="4">
    <source>
        <dbReference type="PROSITE-ProRule" id="PRU00068"/>
    </source>
</evidence>
<evidence type="ECO:0000255" key="5">
    <source>
        <dbReference type="PROSITE-ProRule" id="PRU00076"/>
    </source>
</evidence>
<evidence type="ECO:0000255" key="6">
    <source>
        <dbReference type="PROSITE-ProRule" id="PRU00276"/>
    </source>
</evidence>
<feature type="signal peptide" evidence="3">
    <location>
        <begin position="1"/>
        <end position="16"/>
    </location>
</feature>
<feature type="propeptide" id="PRO_0000029049" evidence="1">
    <location>
        <begin position="17"/>
        <end position="173"/>
    </location>
</feature>
<feature type="chain" id="PRO_0000029048" description="Disintegrin and metalloproteinase domain-containing protein 2">
    <location>
        <begin position="174"/>
        <end position="751"/>
    </location>
</feature>
<feature type="topological domain" description="Extracellular" evidence="3">
    <location>
        <begin position="17"/>
        <end position="702"/>
    </location>
</feature>
<feature type="transmembrane region" description="Helical" evidence="3">
    <location>
        <begin position="703"/>
        <end position="723"/>
    </location>
</feature>
<feature type="topological domain" description="Cytoplasmic" evidence="3">
    <location>
        <begin position="724"/>
        <end position="751"/>
    </location>
</feature>
<feature type="domain" description="Peptidase M12B" evidence="6">
    <location>
        <begin position="177"/>
        <end position="374"/>
    </location>
</feature>
<feature type="domain" description="Disintegrin" evidence="4">
    <location>
        <begin position="383"/>
        <end position="472"/>
    </location>
</feature>
<feature type="domain" description="EGF-like" evidence="5">
    <location>
        <begin position="612"/>
        <end position="645"/>
    </location>
</feature>
<feature type="modified residue" description="Phosphoserine" evidence="2">
    <location>
        <position position="745"/>
    </location>
</feature>
<feature type="glycosylation site" description="N-linked (GlcNAc...) asparagine" evidence="3">
    <location>
        <position position="122"/>
    </location>
</feature>
<feature type="glycosylation site" description="N-linked (GlcNAc...) asparagine" evidence="3">
    <location>
        <position position="147"/>
    </location>
</feature>
<feature type="glycosylation site" description="N-linked (GlcNAc...) asparagine" evidence="3">
    <location>
        <position position="219"/>
    </location>
</feature>
<feature type="glycosylation site" description="N-linked (GlcNAc...) asparagine" evidence="3">
    <location>
        <position position="289"/>
    </location>
</feature>
<feature type="glycosylation site" description="N-linked (GlcNAc...) asparagine" evidence="3">
    <location>
        <position position="352"/>
    </location>
</feature>
<feature type="glycosylation site" description="N-linked (GlcNAc...) asparagine" evidence="3">
    <location>
        <position position="434"/>
    </location>
</feature>
<feature type="glycosylation site" description="N-linked (GlcNAc...) asparagine" evidence="3">
    <location>
        <position position="458"/>
    </location>
</feature>
<feature type="glycosylation site" description="N-linked (GlcNAc...) asparagine" evidence="3">
    <location>
        <position position="559"/>
    </location>
</feature>
<feature type="glycosylation site" description="N-linked (GlcNAc...) asparagine" evidence="3">
    <location>
        <position position="566"/>
    </location>
</feature>
<feature type="glycosylation site" description="N-linked (GlcNAc...) asparagine" evidence="3">
    <location>
        <position position="643"/>
    </location>
</feature>
<feature type="disulfide bond" evidence="1">
    <location>
        <begin position="286"/>
        <end position="369"/>
    </location>
</feature>
<feature type="disulfide bond" evidence="1">
    <location>
        <begin position="328"/>
        <end position="353"/>
    </location>
</feature>
<feature type="disulfide bond" evidence="1">
    <location>
        <begin position="330"/>
        <end position="335"/>
    </location>
</feature>
<feature type="disulfide bond" evidence="1">
    <location>
        <begin position="444"/>
        <end position="464"/>
    </location>
</feature>
<feature type="disulfide bond" evidence="1">
    <location>
        <begin position="616"/>
        <end position="627"/>
    </location>
</feature>
<feature type="disulfide bond" evidence="1">
    <location>
        <begin position="621"/>
        <end position="633"/>
    </location>
</feature>
<feature type="disulfide bond" evidence="1">
    <location>
        <begin position="635"/>
        <end position="644"/>
    </location>
</feature>
<proteinExistence type="evidence at transcript level"/>
<gene>
    <name type="primary">ADAM2</name>
    <name type="synonym">FTNB</name>
</gene>
<sequence>MLRVLFLLCGLSGLRTKENSERLHVQVTVPEKMRSVTSEGFETEVVYNIVIEGKTYTLNLMQKLFLPRDFRVYGYDSTGIMKDLEQQFQNFCYYQGFVEGYPNSMVIVSTCTGLRGLLQFENVTYGIEPLESSIGFEHVIYQVKNKNESISLYAEKEVEFRDLPYKVQSVQPREFSQYIEMHVVVEKNLYKHMGSDTAVVSQKIFQLIGLTNAVFTSFNITIILSSLELWIDENKISTTGDANELLYRFLKWKKSYLVLRPHDVAFLLVYREIAKYVGATFQGKMCDINYSGGVALHPKTISLESLAIILAQLLSLSMGIAYDDINKCKCPGSVCIMNPEAIHSSGVKIFSNCSIEDFSRFISKQKSQCLQNLPRLEPFYKQDAVCGNSIVEAGEMCDCGTAEECGRAVPICCNSATCRLEVGSQCAEGECCENCTFKERGQSCRPPVGECDLFEYCNGTSALCPDDIVIQNGHPCGENQWICVDGSCISPPEQCKSIFGEEVEGGTPECYEELNAMADIILGICGITHDGYKKCESGNRKCGKLMCKHTTENIIDIKNATIIYANVSGSICLSLEYKPDHLDAAKMWVPNGAVCGSNKICRDKACVETTYVNLGCTLQNCNNQGICNSLQHCHCNPTFLPPNCSAVDERWAGGSVDSGNFQGGGVPGIGGLTSVGTPPFIPGVPGVRRYMEDVYQTAKPTRWPFFLLIPFFIILGALIAILVKVQFQRKKWKTEDYTSDEQFESDSELKE</sequence>
<accession>Q28660</accession>
<reference key="1">
    <citation type="journal article" date="1996" name="Mol. Reprod. Dev.">
        <title>Cloning and expression of recombinant rabbit fertilin.</title>
        <authorList>
            <person name="Hardy C.M."/>
            <person name="Holland M.K."/>
        </authorList>
    </citation>
    <scope>NUCLEOTIDE SEQUENCE [MRNA]</scope>
</reference>
<protein>
    <recommendedName>
        <fullName>Disintegrin and metalloproteinase domain-containing protein 2</fullName>
        <shortName>ADAM 2</shortName>
    </recommendedName>
    <alternativeName>
        <fullName>Fertilin subunit beta</fullName>
    </alternativeName>
    <alternativeName>
        <fullName>PH-30</fullName>
        <shortName>PH30</shortName>
    </alternativeName>
    <alternativeName>
        <fullName>PH30-beta</fullName>
    </alternativeName>
</protein>
<comment type="function">
    <text evidence="1">Sperm surface membrane protein that may be involved in sperm-egg plasma membrane adhesion and fusion during fertilization. Could have a direct role in sperm-zona binding or migration of sperm from the uterus into the oviduct. Interactions with egg membrane could be mediated via binding between its disintegrin-like domain to one or more integrins receptors on the egg. This is a non catalytic metalloprotease-like protein (By similarity).</text>
</comment>
<comment type="subunit">
    <text>Heterodimer with ADAM1/fertilin subunit alpha.</text>
</comment>
<comment type="subcellular location">
    <subcellularLocation>
        <location>Membrane</location>
        <topology>Single-pass type I membrane protein</topology>
    </subcellularLocation>
</comment>
<comment type="tissue specificity">
    <text>Expressed specifically in testis.</text>
</comment>
<comment type="domain">
    <text evidence="1">A tripeptide motif (VGE) within disintegrin-like domain could be involved in the binding to egg integrin receptor and thus could mediate sperm/egg binding.</text>
</comment>
<comment type="PTM">
    <text evidence="1">The signal and the metalloprotease domain are cleaved during the epididymal maturation of the spermatozoa.</text>
</comment>
<dbReference type="EMBL" id="U46070">
    <property type="protein sequence ID" value="AAA93321.1"/>
    <property type="molecule type" value="mRNA"/>
</dbReference>
<dbReference type="RefSeq" id="NP_001076146.1">
    <property type="nucleotide sequence ID" value="NM_001082677.1"/>
</dbReference>
<dbReference type="SMR" id="Q28660"/>
<dbReference type="FunCoup" id="Q28660">
    <property type="interactions" value="16"/>
</dbReference>
<dbReference type="STRING" id="9986.ENSOCUP00000046349"/>
<dbReference type="MEROPS" id="M12.950"/>
<dbReference type="GlyCosmos" id="Q28660">
    <property type="glycosylation" value="10 sites, No reported glycans"/>
</dbReference>
<dbReference type="GeneID" id="100009397"/>
<dbReference type="KEGG" id="ocu:100009397"/>
<dbReference type="CTD" id="2515"/>
<dbReference type="InParanoid" id="Q28660"/>
<dbReference type="OrthoDB" id="5951731at2759"/>
<dbReference type="Proteomes" id="UP000001811">
    <property type="component" value="Unplaced"/>
</dbReference>
<dbReference type="GO" id="GO:0005886">
    <property type="term" value="C:plasma membrane"/>
    <property type="evidence" value="ECO:0007669"/>
    <property type="project" value="TreeGrafter"/>
</dbReference>
<dbReference type="GO" id="GO:0004222">
    <property type="term" value="F:metalloendopeptidase activity"/>
    <property type="evidence" value="ECO:0007669"/>
    <property type="project" value="InterPro"/>
</dbReference>
<dbReference type="GO" id="GO:0007339">
    <property type="term" value="P:binding of sperm to zona pellucida"/>
    <property type="evidence" value="ECO:0007669"/>
    <property type="project" value="TreeGrafter"/>
</dbReference>
<dbReference type="GO" id="GO:0007155">
    <property type="term" value="P:cell adhesion"/>
    <property type="evidence" value="ECO:0007669"/>
    <property type="project" value="UniProtKB-KW"/>
</dbReference>
<dbReference type="GO" id="GO:0008584">
    <property type="term" value="P:male gonad development"/>
    <property type="evidence" value="ECO:0007669"/>
    <property type="project" value="TreeGrafter"/>
</dbReference>
<dbReference type="GO" id="GO:0006508">
    <property type="term" value="P:proteolysis"/>
    <property type="evidence" value="ECO:0007669"/>
    <property type="project" value="InterPro"/>
</dbReference>
<dbReference type="CDD" id="cd04269">
    <property type="entry name" value="ZnMc_adamalysin_II_like"/>
    <property type="match status" value="1"/>
</dbReference>
<dbReference type="FunFam" id="3.40.390.10:FF:000033">
    <property type="entry name" value="A disintegrin and metallopeptidase domain 18"/>
    <property type="match status" value="1"/>
</dbReference>
<dbReference type="FunFam" id="4.10.70.10:FF:000001">
    <property type="entry name" value="Disintegrin and metalloproteinase domain-containing protein 22"/>
    <property type="match status" value="1"/>
</dbReference>
<dbReference type="Gene3D" id="3.40.390.10">
    <property type="entry name" value="Collagenase (Catalytic Domain)"/>
    <property type="match status" value="1"/>
</dbReference>
<dbReference type="Gene3D" id="4.10.70.10">
    <property type="entry name" value="Disintegrin domain"/>
    <property type="match status" value="1"/>
</dbReference>
<dbReference type="InterPro" id="IPR006586">
    <property type="entry name" value="ADAM_Cys-rich"/>
</dbReference>
<dbReference type="InterPro" id="IPR018358">
    <property type="entry name" value="Disintegrin_CS"/>
</dbReference>
<dbReference type="InterPro" id="IPR001762">
    <property type="entry name" value="Disintegrin_dom"/>
</dbReference>
<dbReference type="InterPro" id="IPR036436">
    <property type="entry name" value="Disintegrin_dom_sf"/>
</dbReference>
<dbReference type="InterPro" id="IPR000742">
    <property type="entry name" value="EGF-like_dom"/>
</dbReference>
<dbReference type="InterPro" id="IPR024079">
    <property type="entry name" value="MetalloPept_cat_dom_sf"/>
</dbReference>
<dbReference type="InterPro" id="IPR001590">
    <property type="entry name" value="Peptidase_M12B"/>
</dbReference>
<dbReference type="InterPro" id="IPR002870">
    <property type="entry name" value="Peptidase_M12B_N"/>
</dbReference>
<dbReference type="InterPro" id="IPR034027">
    <property type="entry name" value="Reprolysin_adamalysin"/>
</dbReference>
<dbReference type="PANTHER" id="PTHR11905">
    <property type="entry name" value="ADAM A DISINTEGRIN AND METALLOPROTEASE DOMAIN"/>
    <property type="match status" value="1"/>
</dbReference>
<dbReference type="PANTHER" id="PTHR11905:SF108">
    <property type="entry name" value="DISINTEGRIN AND METALLOPROTEINASE DOMAIN-CONTAINING PROTEIN 2"/>
    <property type="match status" value="1"/>
</dbReference>
<dbReference type="Pfam" id="PF08516">
    <property type="entry name" value="ADAM_CR"/>
    <property type="match status" value="1"/>
</dbReference>
<dbReference type="Pfam" id="PF00200">
    <property type="entry name" value="Disintegrin"/>
    <property type="match status" value="1"/>
</dbReference>
<dbReference type="Pfam" id="PF01562">
    <property type="entry name" value="Pep_M12B_propep"/>
    <property type="match status" value="1"/>
</dbReference>
<dbReference type="Pfam" id="PF01421">
    <property type="entry name" value="Reprolysin"/>
    <property type="match status" value="1"/>
</dbReference>
<dbReference type="PRINTS" id="PR00289">
    <property type="entry name" value="DISINTEGRIN"/>
</dbReference>
<dbReference type="SMART" id="SM00608">
    <property type="entry name" value="ACR"/>
    <property type="match status" value="1"/>
</dbReference>
<dbReference type="SMART" id="SM00050">
    <property type="entry name" value="DISIN"/>
    <property type="match status" value="1"/>
</dbReference>
<dbReference type="SUPFAM" id="SSF57552">
    <property type="entry name" value="Blood coagulation inhibitor (disintegrin)"/>
    <property type="match status" value="1"/>
</dbReference>
<dbReference type="SUPFAM" id="SSF55486">
    <property type="entry name" value="Metalloproteases ('zincins'), catalytic domain"/>
    <property type="match status" value="1"/>
</dbReference>
<dbReference type="PROSITE" id="PS50215">
    <property type="entry name" value="ADAM_MEPRO"/>
    <property type="match status" value="1"/>
</dbReference>
<dbReference type="PROSITE" id="PS00427">
    <property type="entry name" value="DISINTEGRIN_1"/>
    <property type="match status" value="1"/>
</dbReference>
<dbReference type="PROSITE" id="PS50214">
    <property type="entry name" value="DISINTEGRIN_2"/>
    <property type="match status" value="1"/>
</dbReference>
<dbReference type="PROSITE" id="PS50026">
    <property type="entry name" value="EGF_3"/>
    <property type="match status" value="1"/>
</dbReference>
<organism>
    <name type="scientific">Oryctolagus cuniculus</name>
    <name type="common">Rabbit</name>
    <dbReference type="NCBI Taxonomy" id="9986"/>
    <lineage>
        <taxon>Eukaryota</taxon>
        <taxon>Metazoa</taxon>
        <taxon>Chordata</taxon>
        <taxon>Craniata</taxon>
        <taxon>Vertebrata</taxon>
        <taxon>Euteleostomi</taxon>
        <taxon>Mammalia</taxon>
        <taxon>Eutheria</taxon>
        <taxon>Euarchontoglires</taxon>
        <taxon>Glires</taxon>
        <taxon>Lagomorpha</taxon>
        <taxon>Leporidae</taxon>
        <taxon>Oryctolagus</taxon>
    </lineage>
</organism>